<gene>
    <name type="primary">pfkC</name>
    <name type="synonym">pfkA</name>
    <name type="ordered locus">PF1784</name>
</gene>
<dbReference type="EC" id="2.7.1.146"/>
<dbReference type="EMBL" id="AF127909">
    <property type="protein sequence ID" value="AAD48400.1"/>
    <property type="molecule type" value="Genomic_DNA"/>
</dbReference>
<dbReference type="EMBL" id="AE009950">
    <property type="protein sequence ID" value="AAL81908.1"/>
    <property type="molecule type" value="Genomic_DNA"/>
</dbReference>
<dbReference type="RefSeq" id="WP_011012925.1">
    <property type="nucleotide sequence ID" value="NZ_CP023154.1"/>
</dbReference>
<dbReference type="SMR" id="Q9V2Z7"/>
<dbReference type="STRING" id="186497.PF1784"/>
<dbReference type="PaxDb" id="186497-PF1784"/>
<dbReference type="GeneID" id="41713602"/>
<dbReference type="KEGG" id="pfu:PF1784"/>
<dbReference type="PATRIC" id="fig|186497.12.peg.1855"/>
<dbReference type="eggNOG" id="arCOG03370">
    <property type="taxonomic scope" value="Archaea"/>
</dbReference>
<dbReference type="HOGENOM" id="CLU_046643_0_0_2"/>
<dbReference type="OrthoDB" id="85200at2157"/>
<dbReference type="PhylomeDB" id="Q9V2Z7"/>
<dbReference type="BioCyc" id="MetaCyc:MONOMER-11808"/>
<dbReference type="UniPathway" id="UPA00109"/>
<dbReference type="Proteomes" id="UP000001013">
    <property type="component" value="Chromosome"/>
</dbReference>
<dbReference type="GO" id="GO:0005737">
    <property type="term" value="C:cytoplasm"/>
    <property type="evidence" value="ECO:0007669"/>
    <property type="project" value="UniProtKB-SubCell"/>
</dbReference>
<dbReference type="GO" id="GO:0043844">
    <property type="term" value="F:ADP-specific phosphofructokinase activity"/>
    <property type="evidence" value="ECO:0007669"/>
    <property type="project" value="UniProtKB-EC"/>
</dbReference>
<dbReference type="GO" id="GO:0000287">
    <property type="term" value="F:magnesium ion binding"/>
    <property type="evidence" value="ECO:0007669"/>
    <property type="project" value="InterPro"/>
</dbReference>
<dbReference type="GO" id="GO:0008443">
    <property type="term" value="F:phosphofructokinase activity"/>
    <property type="evidence" value="ECO:0007669"/>
    <property type="project" value="InterPro"/>
</dbReference>
<dbReference type="GO" id="GO:0006000">
    <property type="term" value="P:fructose metabolic process"/>
    <property type="evidence" value="ECO:0007669"/>
    <property type="project" value="InterPro"/>
</dbReference>
<dbReference type="GO" id="GO:0006096">
    <property type="term" value="P:glycolytic process"/>
    <property type="evidence" value="ECO:0007669"/>
    <property type="project" value="UniProtKB-UniRule"/>
</dbReference>
<dbReference type="Gene3D" id="3.30.1110.20">
    <property type="match status" value="1"/>
</dbReference>
<dbReference type="Gene3D" id="3.40.1190.20">
    <property type="match status" value="1"/>
</dbReference>
<dbReference type="HAMAP" id="MF_00561">
    <property type="entry name" value="ADP_PFKinase"/>
    <property type="match status" value="1"/>
</dbReference>
<dbReference type="InterPro" id="IPR007666">
    <property type="entry name" value="ADP_PFK/GK"/>
</dbReference>
<dbReference type="InterPro" id="IPR015990">
    <property type="entry name" value="ADP_PFK/GK_arc"/>
</dbReference>
<dbReference type="InterPro" id="IPR011790">
    <property type="entry name" value="ADP_PFK_arc"/>
</dbReference>
<dbReference type="InterPro" id="IPR029056">
    <property type="entry name" value="Ribokinase-like"/>
</dbReference>
<dbReference type="NCBIfam" id="TIGR02045">
    <property type="entry name" value="P_fruct_ADP"/>
    <property type="match status" value="1"/>
</dbReference>
<dbReference type="PANTHER" id="PTHR21208">
    <property type="entry name" value="ADP-DEPENDENT GLUCOKINASE"/>
    <property type="match status" value="1"/>
</dbReference>
<dbReference type="PANTHER" id="PTHR21208:SF1">
    <property type="entry name" value="ADP-DEPENDENT GLUCOKINASE"/>
    <property type="match status" value="1"/>
</dbReference>
<dbReference type="Pfam" id="PF04587">
    <property type="entry name" value="ADP_PFK_GK"/>
    <property type="match status" value="1"/>
</dbReference>
<dbReference type="PIRSF" id="PIRSF015883">
    <property type="entry name" value="ADP-Pfk_glckin"/>
    <property type="match status" value="1"/>
</dbReference>
<dbReference type="SUPFAM" id="SSF53613">
    <property type="entry name" value="Ribokinase-like"/>
    <property type="match status" value="1"/>
</dbReference>
<dbReference type="PROSITE" id="PS51255">
    <property type="entry name" value="ADPK"/>
    <property type="match status" value="1"/>
</dbReference>
<comment type="function">
    <text>Catalyzes the phosphorylation of fructose 6-phosphate to fructose 1,6-bisphosphate using ADP as the phosphate donor. As a phosphoryl group donor, ADP can be replaced by GDP, ATP, and GTP to a limited extent.</text>
</comment>
<comment type="catalytic activity">
    <reaction>
        <text>beta-D-fructose 6-phosphate + ADP = beta-D-fructose 1,6-bisphosphate + AMP + H(+)</text>
        <dbReference type="Rhea" id="RHEA:20105"/>
        <dbReference type="ChEBI" id="CHEBI:15378"/>
        <dbReference type="ChEBI" id="CHEBI:32966"/>
        <dbReference type="ChEBI" id="CHEBI:57634"/>
        <dbReference type="ChEBI" id="CHEBI:456215"/>
        <dbReference type="ChEBI" id="CHEBI:456216"/>
        <dbReference type="EC" id="2.7.1.146"/>
    </reaction>
</comment>
<comment type="cofactor">
    <cofactor evidence="1">
        <name>Mg(2+)</name>
        <dbReference type="ChEBI" id="CHEBI:18420"/>
    </cofactor>
    <text evidence="1">Binds 1 Mg(2+) ion per subunit.</text>
</comment>
<comment type="activity regulation">
    <text>Inhibited by AMP and ATP.</text>
</comment>
<comment type="biophysicochemical properties">
    <kinetics>
        <KM>2.3 mM for fructose 6-phosphate</KM>
        <KM>0.11 mM for ADP</KM>
        <Vmax>194.0 umol/min/mg enzyme with fructose 6-phosphate as substrate</Vmax>
        <Vmax>150.0 umol/min/mg enzyme with ADP as substrate</Vmax>
        <text>The kinetic parameters were measured at 50 degrees Celsius.</text>
    </kinetics>
    <phDependence>
        <text>Optimum pH is 6.5.</text>
    </phDependence>
</comment>
<comment type="pathway">
    <text>Carbohydrate degradation; glycolysis.</text>
</comment>
<comment type="subunit">
    <text>Homotetramer.</text>
</comment>
<comment type="subcellular location">
    <subcellularLocation>
        <location>Cytoplasm</location>
    </subcellularLocation>
</comment>
<comment type="similarity">
    <text evidence="2">Belongs to the carbohydrate kinase PfkC family.</text>
</comment>
<evidence type="ECO:0000250" key="1"/>
<evidence type="ECO:0000305" key="2"/>
<protein>
    <recommendedName>
        <fullName>ADP-specific phosphofructokinase</fullName>
        <ecNumber>2.7.1.146</ecNumber>
    </recommendedName>
    <alternativeName>
        <fullName>ADP-dependent phosphofructokinase</fullName>
        <shortName>ADP-Pfk</shortName>
    </alternativeName>
</protein>
<proteinExistence type="evidence at protein level"/>
<feature type="chain" id="PRO_0000184766" description="ADP-specific phosphofructokinase">
    <location>
        <begin position="1"/>
        <end position="454"/>
    </location>
</feature>
<feature type="domain" description="ADPK">
    <location>
        <begin position="1"/>
        <end position="452"/>
    </location>
</feature>
<feature type="active site" description="Proton acceptor" evidence="1">
    <location>
        <position position="436"/>
    </location>
</feature>
<feature type="binding site" evidence="1">
    <location>
        <position position="263"/>
    </location>
    <ligand>
        <name>Mg(2+)</name>
        <dbReference type="ChEBI" id="CHEBI:18420"/>
    </ligand>
</feature>
<feature type="binding site" evidence="1">
    <location>
        <position position="293"/>
    </location>
    <ligand>
        <name>Mg(2+)</name>
        <dbReference type="ChEBI" id="CHEBI:18420"/>
    </ligand>
</feature>
<feature type="binding site" evidence="1">
    <location>
        <position position="436"/>
    </location>
    <ligand>
        <name>Mg(2+)</name>
        <dbReference type="ChEBI" id="CHEBI:18420"/>
    </ligand>
</feature>
<reference key="1">
    <citation type="journal article" date="1999" name="J. Biol. Chem.">
        <title>Molecular and biochemical characterization of the ADP-dependent phosphofructokinase from the hyperthermophilic archaeon Pyrococcus furiosus.</title>
        <authorList>
            <person name="Tuininga J.E."/>
            <person name="Verhees C.H."/>
            <person name="van der Oost J."/>
            <person name="Kengen S.W.M."/>
            <person name="Stams A.J.M."/>
            <person name="de Vos W.M."/>
        </authorList>
    </citation>
    <scope>NUCLEOTIDE SEQUENCE [GENOMIC DNA]</scope>
    <scope>CHARACTERIZATION</scope>
    <source>
        <strain>ATCC 43587 / DSM 3638 / JCM 8422 / Vc1</strain>
    </source>
</reference>
<reference key="2">
    <citation type="journal article" date="1999" name="Genetics">
        <title>Divergence of the hyperthermophilic archaea Pyrococcus furiosus and P. horikoshii inferred from complete genomic sequences.</title>
        <authorList>
            <person name="Maeder D.L."/>
            <person name="Weiss R.B."/>
            <person name="Dunn D.M."/>
            <person name="Cherry J.L."/>
            <person name="Gonzalez J.M."/>
            <person name="DiRuggiero J."/>
            <person name="Robb F.T."/>
        </authorList>
    </citation>
    <scope>NUCLEOTIDE SEQUENCE [LARGE SCALE GENOMIC DNA]</scope>
    <source>
        <strain>ATCC 43587 / DSM 3638 / JCM 8422 / Vc1</strain>
    </source>
</reference>
<keyword id="KW-0963">Cytoplasm</keyword>
<keyword id="KW-0324">Glycolysis</keyword>
<keyword id="KW-0418">Kinase</keyword>
<keyword id="KW-0460">Magnesium</keyword>
<keyword id="KW-0479">Metal-binding</keyword>
<keyword id="KW-1185">Reference proteome</keyword>
<keyword id="KW-0808">Transferase</keyword>
<sequence length="454" mass="52337">MIDEVRELGIYTAYNANVDAIVNLNAEIIQRLIEEFGPDKIKRRLEEYPREINEPLDFVARLVHALKTGKPMAVPLVNEELHQWFDKTFKYDTERIGGQAGIIANILVGLKVKKVIAYTPFLPKRLAELFKEGILYPVVEEDKLVLKPIQSAYREGDPLKVNRIFEFRKGTRFKLGDEVIEVPHSGRFIVSSRFESISRIETKDELRKFLPEIGEMVDGAILSGYQGIRLQYSDGKDANYYLRRAKEDIRLLKKNKDIKIHVEFASIQDRRLRKKVVNNIFPMVDSVGMDEAEIAYILSVLGYSDLADRIFMYNRIEDAILGGMIILDELNFEILQVHTIYYLMYITHRDNPLSEEELMRSLDFGTILAATRASLGDINDPRDVKVGMSVPYNERSEYIKLRFEEAKRKLRLKEYKVVIVPTRLVPNPVSTVGLGDTISTGTFLSYLSLLRRHQ</sequence>
<organism>
    <name type="scientific">Pyrococcus furiosus (strain ATCC 43587 / DSM 3638 / JCM 8422 / Vc1)</name>
    <dbReference type="NCBI Taxonomy" id="186497"/>
    <lineage>
        <taxon>Archaea</taxon>
        <taxon>Methanobacteriati</taxon>
        <taxon>Methanobacteriota</taxon>
        <taxon>Thermococci</taxon>
        <taxon>Thermococcales</taxon>
        <taxon>Thermococcaceae</taxon>
        <taxon>Pyrococcus</taxon>
    </lineage>
</organism>
<name>K6PF_PYRFU</name>
<accession>Q9V2Z7</accession>